<comment type="function">
    <text evidence="1">Necessary for normal cell division and for the maintenance of normal septation.</text>
</comment>
<comment type="cofactor">
    <cofactor evidence="1">
        <name>Mg(2+)</name>
        <dbReference type="ChEBI" id="CHEBI:18420"/>
    </cofactor>
</comment>
<comment type="similarity">
    <text evidence="1">Belongs to the TRAFAC class TrmE-Era-EngA-EngB-Septin-like GTPase superfamily. EngB GTPase family.</text>
</comment>
<organism>
    <name type="scientific">Chlorobium phaeobacteroides (strain DSM 266 / SMG 266 / 2430)</name>
    <dbReference type="NCBI Taxonomy" id="290317"/>
    <lineage>
        <taxon>Bacteria</taxon>
        <taxon>Pseudomonadati</taxon>
        <taxon>Chlorobiota</taxon>
        <taxon>Chlorobiia</taxon>
        <taxon>Chlorobiales</taxon>
        <taxon>Chlorobiaceae</taxon>
        <taxon>Chlorobium/Pelodictyon group</taxon>
        <taxon>Chlorobium</taxon>
    </lineage>
</organism>
<evidence type="ECO:0000255" key="1">
    <source>
        <dbReference type="HAMAP-Rule" id="MF_00321"/>
    </source>
</evidence>
<feature type="chain" id="PRO_1000005808" description="Probable GTP-binding protein EngB">
    <location>
        <begin position="1"/>
        <end position="192"/>
    </location>
</feature>
<feature type="domain" description="EngB-type G" evidence="1">
    <location>
        <begin position="22"/>
        <end position="192"/>
    </location>
</feature>
<feature type="binding site" evidence="1">
    <location>
        <begin position="30"/>
        <end position="37"/>
    </location>
    <ligand>
        <name>GTP</name>
        <dbReference type="ChEBI" id="CHEBI:37565"/>
    </ligand>
</feature>
<feature type="binding site" evidence="1">
    <location>
        <position position="37"/>
    </location>
    <ligand>
        <name>Mg(2+)</name>
        <dbReference type="ChEBI" id="CHEBI:18420"/>
    </ligand>
</feature>
<feature type="binding site" evidence="1">
    <location>
        <begin position="57"/>
        <end position="61"/>
    </location>
    <ligand>
        <name>GTP</name>
        <dbReference type="ChEBI" id="CHEBI:37565"/>
    </ligand>
</feature>
<feature type="binding site" evidence="1">
    <location>
        <position position="59"/>
    </location>
    <ligand>
        <name>Mg(2+)</name>
        <dbReference type="ChEBI" id="CHEBI:18420"/>
    </ligand>
</feature>
<feature type="binding site" evidence="1">
    <location>
        <begin position="75"/>
        <end position="78"/>
    </location>
    <ligand>
        <name>GTP</name>
        <dbReference type="ChEBI" id="CHEBI:37565"/>
    </ligand>
</feature>
<feature type="binding site" evidence="1">
    <location>
        <begin position="142"/>
        <end position="145"/>
    </location>
    <ligand>
        <name>GTP</name>
        <dbReference type="ChEBI" id="CHEBI:37565"/>
    </ligand>
</feature>
<feature type="binding site" evidence="1">
    <location>
        <begin position="172"/>
        <end position="174"/>
    </location>
    <ligand>
        <name>GTP</name>
        <dbReference type="ChEBI" id="CHEBI:37565"/>
    </ligand>
</feature>
<reference key="1">
    <citation type="submission" date="2006-12" db="EMBL/GenBank/DDBJ databases">
        <title>Complete sequence of Chlorobium phaeobacteroides DSM 266.</title>
        <authorList>
            <consortium name="US DOE Joint Genome Institute"/>
            <person name="Copeland A."/>
            <person name="Lucas S."/>
            <person name="Lapidus A."/>
            <person name="Barry K."/>
            <person name="Detter J.C."/>
            <person name="Glavina del Rio T."/>
            <person name="Hammon N."/>
            <person name="Israni S."/>
            <person name="Pitluck S."/>
            <person name="Goltsman E."/>
            <person name="Schmutz J."/>
            <person name="Larimer F."/>
            <person name="Land M."/>
            <person name="Hauser L."/>
            <person name="Mikhailova N."/>
            <person name="Li T."/>
            <person name="Overmann J."/>
            <person name="Bryant D.A."/>
            <person name="Richardson P."/>
        </authorList>
    </citation>
    <scope>NUCLEOTIDE SEQUENCE [LARGE SCALE GENOMIC DNA]</scope>
    <source>
        <strain>DSM 266 / SMG 266 / 2430</strain>
    </source>
</reference>
<name>ENGB_CHLPD</name>
<keyword id="KW-0131">Cell cycle</keyword>
<keyword id="KW-0132">Cell division</keyword>
<keyword id="KW-0342">GTP-binding</keyword>
<keyword id="KW-0460">Magnesium</keyword>
<keyword id="KW-0479">Metal-binding</keyword>
<keyword id="KW-0547">Nucleotide-binding</keyword>
<keyword id="KW-1185">Reference proteome</keyword>
<keyword id="KW-0717">Septation</keyword>
<proteinExistence type="inferred from homology"/>
<accession>A1BJ02</accession>
<gene>
    <name evidence="1" type="primary">engB</name>
    <name type="ordered locus">Cpha266_2391</name>
</gene>
<sequence length="192" mass="21348">MKITDAAFYISAAALSGLPDLQIPEIVFAGRSNVGKSTLLNSLAGIKGLAKTSSTPGKTRLINFFLVNKAFFFVDLPGYGFAAVGHEQHEAWKKLLTTYIERRSAITLVVLLVDSRHPAMQSDREMIDYLTYLGKPYGIVLTKDDKLTQSQRIKARRVMESSALNAEFIVNYSSFSSKARLELLAHLAQYIR</sequence>
<dbReference type="EMBL" id="CP000492">
    <property type="protein sequence ID" value="ABL66379.1"/>
    <property type="molecule type" value="Genomic_DNA"/>
</dbReference>
<dbReference type="RefSeq" id="WP_011746162.1">
    <property type="nucleotide sequence ID" value="NC_008639.1"/>
</dbReference>
<dbReference type="SMR" id="A1BJ02"/>
<dbReference type="STRING" id="290317.Cpha266_2391"/>
<dbReference type="KEGG" id="cph:Cpha266_2391"/>
<dbReference type="eggNOG" id="COG0218">
    <property type="taxonomic scope" value="Bacteria"/>
</dbReference>
<dbReference type="HOGENOM" id="CLU_033732_3_0_10"/>
<dbReference type="OrthoDB" id="9804921at2"/>
<dbReference type="Proteomes" id="UP000008701">
    <property type="component" value="Chromosome"/>
</dbReference>
<dbReference type="GO" id="GO:0005829">
    <property type="term" value="C:cytosol"/>
    <property type="evidence" value="ECO:0007669"/>
    <property type="project" value="TreeGrafter"/>
</dbReference>
<dbReference type="GO" id="GO:0005525">
    <property type="term" value="F:GTP binding"/>
    <property type="evidence" value="ECO:0007669"/>
    <property type="project" value="UniProtKB-UniRule"/>
</dbReference>
<dbReference type="GO" id="GO:0046872">
    <property type="term" value="F:metal ion binding"/>
    <property type="evidence" value="ECO:0007669"/>
    <property type="project" value="UniProtKB-KW"/>
</dbReference>
<dbReference type="GO" id="GO:0000917">
    <property type="term" value="P:division septum assembly"/>
    <property type="evidence" value="ECO:0007669"/>
    <property type="project" value="UniProtKB-KW"/>
</dbReference>
<dbReference type="CDD" id="cd01876">
    <property type="entry name" value="YihA_EngB"/>
    <property type="match status" value="1"/>
</dbReference>
<dbReference type="Gene3D" id="3.40.50.300">
    <property type="entry name" value="P-loop containing nucleotide triphosphate hydrolases"/>
    <property type="match status" value="1"/>
</dbReference>
<dbReference type="HAMAP" id="MF_00321">
    <property type="entry name" value="GTPase_EngB"/>
    <property type="match status" value="1"/>
</dbReference>
<dbReference type="InterPro" id="IPR030393">
    <property type="entry name" value="G_ENGB_dom"/>
</dbReference>
<dbReference type="InterPro" id="IPR006073">
    <property type="entry name" value="GTP-bd"/>
</dbReference>
<dbReference type="InterPro" id="IPR019987">
    <property type="entry name" value="GTP-bd_ribosome_bio_YsxC"/>
</dbReference>
<dbReference type="InterPro" id="IPR027417">
    <property type="entry name" value="P-loop_NTPase"/>
</dbReference>
<dbReference type="NCBIfam" id="TIGR03598">
    <property type="entry name" value="GTPase_YsxC"/>
    <property type="match status" value="1"/>
</dbReference>
<dbReference type="PANTHER" id="PTHR11649:SF13">
    <property type="entry name" value="ENGB-TYPE G DOMAIN-CONTAINING PROTEIN"/>
    <property type="match status" value="1"/>
</dbReference>
<dbReference type="PANTHER" id="PTHR11649">
    <property type="entry name" value="MSS1/TRME-RELATED GTP-BINDING PROTEIN"/>
    <property type="match status" value="1"/>
</dbReference>
<dbReference type="Pfam" id="PF01926">
    <property type="entry name" value="MMR_HSR1"/>
    <property type="match status" value="1"/>
</dbReference>
<dbReference type="SUPFAM" id="SSF52540">
    <property type="entry name" value="P-loop containing nucleoside triphosphate hydrolases"/>
    <property type="match status" value="1"/>
</dbReference>
<dbReference type="PROSITE" id="PS51706">
    <property type="entry name" value="G_ENGB"/>
    <property type="match status" value="1"/>
</dbReference>
<protein>
    <recommendedName>
        <fullName evidence="1">Probable GTP-binding protein EngB</fullName>
    </recommendedName>
</protein>